<evidence type="ECO:0000250" key="1"/>
<evidence type="ECO:0000255" key="2"/>
<evidence type="ECO:0000269" key="3">
    <source>
    </source>
</evidence>
<evidence type="ECO:0000305" key="4"/>
<organism>
    <name type="scientific">Solanum lycopersicum</name>
    <name type="common">Tomato</name>
    <name type="synonym">Lycopersicon esculentum</name>
    <dbReference type="NCBI Taxonomy" id="4081"/>
    <lineage>
        <taxon>Eukaryota</taxon>
        <taxon>Viridiplantae</taxon>
        <taxon>Streptophyta</taxon>
        <taxon>Embryophyta</taxon>
        <taxon>Tracheophyta</taxon>
        <taxon>Spermatophyta</taxon>
        <taxon>Magnoliopsida</taxon>
        <taxon>eudicotyledons</taxon>
        <taxon>Gunneridae</taxon>
        <taxon>Pentapetalae</taxon>
        <taxon>asterids</taxon>
        <taxon>lamiids</taxon>
        <taxon>Solanales</taxon>
        <taxon>Solanaceae</taxon>
        <taxon>Solanoideae</taxon>
        <taxon>Solaneae</taxon>
        <taxon>Solanum</taxon>
        <taxon>Solanum subgen. Lycopersicon</taxon>
    </lineage>
</organism>
<feature type="signal peptide" evidence="2">
    <location>
        <begin position="1"/>
        <end position="23"/>
    </location>
</feature>
<feature type="chain" id="PRO_0000018388" description="Non-specific lipid-transfer protein 1">
    <location>
        <begin position="24"/>
        <end position="114"/>
    </location>
</feature>
<feature type="disulfide bond" evidence="1">
    <location>
        <begin position="27"/>
        <end position="73"/>
    </location>
</feature>
<feature type="disulfide bond" evidence="1">
    <location>
        <begin position="37"/>
        <end position="50"/>
    </location>
</feature>
<feature type="disulfide bond" evidence="1">
    <location>
        <begin position="51"/>
        <end position="96"/>
    </location>
</feature>
<feature type="disulfide bond" evidence="1">
    <location>
        <begin position="71"/>
        <end position="110"/>
    </location>
</feature>
<reference key="1">
    <citation type="journal article" date="1992" name="Plant Mol. Biol.">
        <title>A probable lipid transfer protein gene is induced by NaCl in stems of tomato plants.</title>
        <authorList>
            <person name="Torres-Schumann S."/>
            <person name="Godoy J.A."/>
            <person name="Pintor-Toro J.A."/>
        </authorList>
    </citation>
    <scope>NUCLEOTIDE SEQUENCE [MRNA]</scope>
    <scope>DEVELOPMENTAL STAGE</scope>
    <scope>INDUCTION</scope>
    <source>
        <strain>cv. Rutgers-Marglobe</strain>
        <tissue>Seed</tissue>
    </source>
</reference>
<comment type="function">
    <text>Plant non-specific lipid-transfer proteins transfer phospholipids as well as galactolipids across membranes. May play a role in wax or cutin deposition in the cell walls of expanding epidermal cells and certain secretory tissues.</text>
</comment>
<comment type="developmental stage">
    <text evidence="3">Expressed during early steps of seed germination.</text>
</comment>
<comment type="induction">
    <text evidence="3">By salt-stress, mannitol or ABA in stems. By heat shock in seedlings.</text>
</comment>
<comment type="similarity">
    <text evidence="4">Belongs to the plant LTP family.</text>
</comment>
<gene>
    <name type="primary">TSW12</name>
</gene>
<protein>
    <recommendedName>
        <fullName>Non-specific lipid-transfer protein 1</fullName>
        <shortName>LTP 1</shortName>
    </recommendedName>
</protein>
<accession>P27056</accession>
<keyword id="KW-1015">Disulfide bond</keyword>
<keyword id="KW-0446">Lipid-binding</keyword>
<keyword id="KW-1185">Reference proteome</keyword>
<keyword id="KW-0732">Signal</keyword>
<keyword id="KW-0346">Stress response</keyword>
<keyword id="KW-0813">Transport</keyword>
<name>NLTP1_SOLLC</name>
<dbReference type="EMBL" id="X56040">
    <property type="protein sequence ID" value="CAA39512.1"/>
    <property type="molecule type" value="mRNA"/>
</dbReference>
<dbReference type="PIR" id="S20862">
    <property type="entry name" value="S20862"/>
</dbReference>
<dbReference type="RefSeq" id="NP_001234074.1">
    <property type="nucleotide sequence ID" value="NM_001247145.2"/>
</dbReference>
<dbReference type="SMR" id="P27056"/>
<dbReference type="FunCoup" id="P27056">
    <property type="interactions" value="1581"/>
</dbReference>
<dbReference type="STRING" id="4081.P27056"/>
<dbReference type="Allergome" id="1488">
    <property type="allergen name" value="Sola l 3"/>
</dbReference>
<dbReference type="PaxDb" id="4081-Solyc10g075110.1.1"/>
<dbReference type="GeneID" id="544066"/>
<dbReference type="KEGG" id="sly:544066"/>
<dbReference type="eggNOG" id="ENOG502S4CI">
    <property type="taxonomic scope" value="Eukaryota"/>
</dbReference>
<dbReference type="HOGENOM" id="CLU_128423_0_0_1"/>
<dbReference type="InParanoid" id="P27056"/>
<dbReference type="OrthoDB" id="1890443at2759"/>
<dbReference type="PhylomeDB" id="P27056"/>
<dbReference type="Proteomes" id="UP000004994">
    <property type="component" value="Unplaced"/>
</dbReference>
<dbReference type="GO" id="GO:0008289">
    <property type="term" value="F:lipid binding"/>
    <property type="evidence" value="ECO:0007669"/>
    <property type="project" value="UniProtKB-KW"/>
</dbReference>
<dbReference type="GO" id="GO:0006869">
    <property type="term" value="P:lipid transport"/>
    <property type="evidence" value="ECO:0007669"/>
    <property type="project" value="InterPro"/>
</dbReference>
<dbReference type="CDD" id="cd01960">
    <property type="entry name" value="nsLTP1"/>
    <property type="match status" value="1"/>
</dbReference>
<dbReference type="Gene3D" id="1.10.110.10">
    <property type="entry name" value="Plant lipid-transfer and hydrophobic proteins"/>
    <property type="match status" value="1"/>
</dbReference>
<dbReference type="InterPro" id="IPR036312">
    <property type="entry name" value="Bifun_inhib/LTP/seed_sf"/>
</dbReference>
<dbReference type="InterPro" id="IPR016140">
    <property type="entry name" value="Bifunc_inhib/LTP/seed_store"/>
</dbReference>
<dbReference type="InterPro" id="IPR000528">
    <property type="entry name" value="Plant_nsLTP"/>
</dbReference>
<dbReference type="PANTHER" id="PTHR33076">
    <property type="entry name" value="NON-SPECIFIC LIPID-TRANSFER PROTEIN 2-RELATED"/>
    <property type="match status" value="1"/>
</dbReference>
<dbReference type="Pfam" id="PF00234">
    <property type="entry name" value="Tryp_alpha_amyl"/>
    <property type="match status" value="1"/>
</dbReference>
<dbReference type="PRINTS" id="PR00382">
    <property type="entry name" value="LIPIDTRNSFER"/>
</dbReference>
<dbReference type="SMART" id="SM00499">
    <property type="entry name" value="AAI"/>
    <property type="match status" value="1"/>
</dbReference>
<dbReference type="SUPFAM" id="SSF47699">
    <property type="entry name" value="Bifunctional inhibitor/lipid-transfer protein/seed storage 2S albumin"/>
    <property type="match status" value="1"/>
</dbReference>
<dbReference type="PROSITE" id="PS00597">
    <property type="entry name" value="PLANT_LTP"/>
    <property type="match status" value="1"/>
</dbReference>
<proteinExistence type="evidence at transcript level"/>
<sequence>MEMVSKIACFVLLCMVVVAPHAEALTCGQVTAGLAPCLPYLQGRGPLGGCCGGVKNLLGSAKTTADRKTACTCLKSAANAIKGIDLNKAAGIPSVCKVNIPYKISPSTDCSTVQ</sequence>